<keyword id="KW-0028">Amino-acid biosynthesis</keyword>
<keyword id="KW-0057">Aromatic amino acid biosynthesis</keyword>
<keyword id="KW-0170">Cobalt</keyword>
<keyword id="KW-0963">Cytoplasm</keyword>
<keyword id="KW-0456">Lyase</keyword>
<keyword id="KW-0479">Metal-binding</keyword>
<keyword id="KW-0520">NAD</keyword>
<keyword id="KW-0547">Nucleotide-binding</keyword>
<keyword id="KW-0862">Zinc</keyword>
<reference key="1">
    <citation type="journal article" date="2004" name="Nucleic Acids Res.">
        <title>Whole genome comparisons of serotype 4b and 1/2a strains of the food-borne pathogen Listeria monocytogenes reveal new insights into the core genome components of this species.</title>
        <authorList>
            <person name="Nelson K.E."/>
            <person name="Fouts D.E."/>
            <person name="Mongodin E.F."/>
            <person name="Ravel J."/>
            <person name="DeBoy R.T."/>
            <person name="Kolonay J.F."/>
            <person name="Rasko D.A."/>
            <person name="Angiuoli S.V."/>
            <person name="Gill S.R."/>
            <person name="Paulsen I.T."/>
            <person name="Peterson J.D."/>
            <person name="White O."/>
            <person name="Nelson W.C."/>
            <person name="Nierman W.C."/>
            <person name="Beanan M.J."/>
            <person name="Brinkac L.M."/>
            <person name="Daugherty S.C."/>
            <person name="Dodson R.J."/>
            <person name="Durkin A.S."/>
            <person name="Madupu R."/>
            <person name="Haft D.H."/>
            <person name="Selengut J."/>
            <person name="Van Aken S.E."/>
            <person name="Khouri H.M."/>
            <person name="Fedorova N."/>
            <person name="Forberger H.A."/>
            <person name="Tran B."/>
            <person name="Kathariou S."/>
            <person name="Wonderling L.D."/>
            <person name="Uhlich G.A."/>
            <person name="Bayles D.O."/>
            <person name="Luchansky J.B."/>
            <person name="Fraser C.M."/>
        </authorList>
    </citation>
    <scope>NUCLEOTIDE SEQUENCE [LARGE SCALE GENOMIC DNA]</scope>
    <source>
        <strain>F2365</strain>
    </source>
</reference>
<gene>
    <name evidence="1" type="primary">aroB</name>
    <name type="ordered locus">LMOf2365_1956</name>
</gene>
<organism>
    <name type="scientific">Listeria monocytogenes serotype 4b (strain F2365)</name>
    <dbReference type="NCBI Taxonomy" id="265669"/>
    <lineage>
        <taxon>Bacteria</taxon>
        <taxon>Bacillati</taxon>
        <taxon>Bacillota</taxon>
        <taxon>Bacilli</taxon>
        <taxon>Bacillales</taxon>
        <taxon>Listeriaceae</taxon>
        <taxon>Listeria</taxon>
    </lineage>
</organism>
<feature type="chain" id="PRO_0000140753" description="3-dehydroquinate synthase">
    <location>
        <begin position="1"/>
        <end position="365"/>
    </location>
</feature>
<feature type="binding site" evidence="1">
    <location>
        <begin position="106"/>
        <end position="110"/>
    </location>
    <ligand>
        <name>NAD(+)</name>
        <dbReference type="ChEBI" id="CHEBI:57540"/>
    </ligand>
</feature>
<feature type="binding site" evidence="1">
    <location>
        <begin position="130"/>
        <end position="131"/>
    </location>
    <ligand>
        <name>NAD(+)</name>
        <dbReference type="ChEBI" id="CHEBI:57540"/>
    </ligand>
</feature>
<feature type="binding site" evidence="1">
    <location>
        <position position="142"/>
    </location>
    <ligand>
        <name>NAD(+)</name>
        <dbReference type="ChEBI" id="CHEBI:57540"/>
    </ligand>
</feature>
<feature type="binding site" evidence="1">
    <location>
        <position position="151"/>
    </location>
    <ligand>
        <name>NAD(+)</name>
        <dbReference type="ChEBI" id="CHEBI:57540"/>
    </ligand>
</feature>
<feature type="binding site" evidence="1">
    <location>
        <begin position="169"/>
        <end position="172"/>
    </location>
    <ligand>
        <name>NAD(+)</name>
        <dbReference type="ChEBI" id="CHEBI:57540"/>
    </ligand>
</feature>
<feature type="binding site" evidence="1">
    <location>
        <position position="184"/>
    </location>
    <ligand>
        <name>Zn(2+)</name>
        <dbReference type="ChEBI" id="CHEBI:29105"/>
    </ligand>
</feature>
<feature type="binding site" evidence="1">
    <location>
        <position position="247"/>
    </location>
    <ligand>
        <name>Zn(2+)</name>
        <dbReference type="ChEBI" id="CHEBI:29105"/>
    </ligand>
</feature>
<feature type="binding site" evidence="1">
    <location>
        <position position="264"/>
    </location>
    <ligand>
        <name>Zn(2+)</name>
        <dbReference type="ChEBI" id="CHEBI:29105"/>
    </ligand>
</feature>
<protein>
    <recommendedName>
        <fullName evidence="1">3-dehydroquinate synthase</fullName>
        <shortName evidence="1">DHQS</shortName>
        <ecNumber evidence="1">4.2.3.4</ecNumber>
    </recommendedName>
</protein>
<proteinExistence type="inferred from homology"/>
<evidence type="ECO:0000255" key="1">
    <source>
        <dbReference type="HAMAP-Rule" id="MF_00110"/>
    </source>
</evidence>
<comment type="function">
    <text evidence="1">Catalyzes the conversion of 3-deoxy-D-arabino-heptulosonate 7-phosphate (DAHP) to dehydroquinate (DHQ).</text>
</comment>
<comment type="catalytic activity">
    <reaction evidence="1">
        <text>7-phospho-2-dehydro-3-deoxy-D-arabino-heptonate = 3-dehydroquinate + phosphate</text>
        <dbReference type="Rhea" id="RHEA:21968"/>
        <dbReference type="ChEBI" id="CHEBI:32364"/>
        <dbReference type="ChEBI" id="CHEBI:43474"/>
        <dbReference type="ChEBI" id="CHEBI:58394"/>
        <dbReference type="EC" id="4.2.3.4"/>
    </reaction>
</comment>
<comment type="cofactor">
    <cofactor evidence="1">
        <name>NAD(+)</name>
        <dbReference type="ChEBI" id="CHEBI:57540"/>
    </cofactor>
</comment>
<comment type="cofactor">
    <cofactor evidence="1">
        <name>Co(2+)</name>
        <dbReference type="ChEBI" id="CHEBI:48828"/>
    </cofactor>
    <cofactor evidence="1">
        <name>Zn(2+)</name>
        <dbReference type="ChEBI" id="CHEBI:29105"/>
    </cofactor>
    <text evidence="1">Binds 1 divalent metal cation per subunit. Can use either Co(2+) or Zn(2+).</text>
</comment>
<comment type="pathway">
    <text evidence="1">Metabolic intermediate biosynthesis; chorismate biosynthesis; chorismate from D-erythrose 4-phosphate and phosphoenolpyruvate: step 2/7.</text>
</comment>
<comment type="subcellular location">
    <subcellularLocation>
        <location evidence="1">Cytoplasm</location>
    </subcellularLocation>
</comment>
<comment type="similarity">
    <text evidence="1">Belongs to the sugar phosphate cyclases superfamily. Dehydroquinate synthase family.</text>
</comment>
<name>AROB_LISMF</name>
<sequence length="365" mass="41200">MPEITVRAKSKTYPVYINEFALEDVREKWTESLAKFSHVFVLTDEHVAELHQAKLDAVLADLPVVTYYVAPNGEEAKTFRVYEDVMTKLIETGLDRKAVLIAFGGGVIGDLGGFVAATYMRGIPFYQVPTTVLAHDSAVGGKVAINHPLGKNMIGNFYQPEAVIYDTQFFATLPEREMRSGFAEMIKHALISDQTLLRALMDTFTEPKDFYTKDLTPFLQRGIEIKANIVAQDETEQGVRAYLNFGHTFGHALEAYGNFGKWLHGEAITYGMIYALTMSETIYGLDFDLAEFKTWLKQLGYDTTFDATVPFNKILENMRHDKKTTFNEISMVLLEEIGEPVIFKAEDDLIFETYKRVMRNGGNGI</sequence>
<accession>Q71Y88</accession>
<dbReference type="EC" id="4.2.3.4" evidence="1"/>
<dbReference type="EMBL" id="AE017262">
    <property type="protein sequence ID" value="AAT04726.1"/>
    <property type="molecule type" value="Genomic_DNA"/>
</dbReference>
<dbReference type="RefSeq" id="WP_009917806.1">
    <property type="nucleotide sequence ID" value="NC_002973.6"/>
</dbReference>
<dbReference type="SMR" id="Q71Y88"/>
<dbReference type="KEGG" id="lmf:LMOf2365_1956"/>
<dbReference type="HOGENOM" id="CLU_001201_0_1_9"/>
<dbReference type="UniPathway" id="UPA00053">
    <property type="reaction ID" value="UER00085"/>
</dbReference>
<dbReference type="GO" id="GO:0005737">
    <property type="term" value="C:cytoplasm"/>
    <property type="evidence" value="ECO:0007669"/>
    <property type="project" value="UniProtKB-SubCell"/>
</dbReference>
<dbReference type="GO" id="GO:0003856">
    <property type="term" value="F:3-dehydroquinate synthase activity"/>
    <property type="evidence" value="ECO:0007669"/>
    <property type="project" value="UniProtKB-UniRule"/>
</dbReference>
<dbReference type="GO" id="GO:0046872">
    <property type="term" value="F:metal ion binding"/>
    <property type="evidence" value="ECO:0007669"/>
    <property type="project" value="UniProtKB-KW"/>
</dbReference>
<dbReference type="GO" id="GO:0000166">
    <property type="term" value="F:nucleotide binding"/>
    <property type="evidence" value="ECO:0007669"/>
    <property type="project" value="UniProtKB-KW"/>
</dbReference>
<dbReference type="GO" id="GO:0008652">
    <property type="term" value="P:amino acid biosynthetic process"/>
    <property type="evidence" value="ECO:0007669"/>
    <property type="project" value="UniProtKB-KW"/>
</dbReference>
<dbReference type="GO" id="GO:0009073">
    <property type="term" value="P:aromatic amino acid family biosynthetic process"/>
    <property type="evidence" value="ECO:0007669"/>
    <property type="project" value="UniProtKB-KW"/>
</dbReference>
<dbReference type="GO" id="GO:0009423">
    <property type="term" value="P:chorismate biosynthetic process"/>
    <property type="evidence" value="ECO:0007669"/>
    <property type="project" value="UniProtKB-UniRule"/>
</dbReference>
<dbReference type="CDD" id="cd08195">
    <property type="entry name" value="DHQS"/>
    <property type="match status" value="1"/>
</dbReference>
<dbReference type="FunFam" id="1.20.1090.10:FF:000019">
    <property type="entry name" value="3-dehydroquinate synthase"/>
    <property type="match status" value="1"/>
</dbReference>
<dbReference type="FunFam" id="3.40.50.1970:FF:000026">
    <property type="entry name" value="3-dehydroquinate synthase"/>
    <property type="match status" value="1"/>
</dbReference>
<dbReference type="Gene3D" id="3.40.50.1970">
    <property type="match status" value="1"/>
</dbReference>
<dbReference type="Gene3D" id="1.20.1090.10">
    <property type="entry name" value="Dehydroquinate synthase-like - alpha domain"/>
    <property type="match status" value="1"/>
</dbReference>
<dbReference type="HAMAP" id="MF_00110">
    <property type="entry name" value="DHQ_synthase"/>
    <property type="match status" value="1"/>
</dbReference>
<dbReference type="InterPro" id="IPR050071">
    <property type="entry name" value="Dehydroquinate_synthase"/>
</dbReference>
<dbReference type="InterPro" id="IPR016037">
    <property type="entry name" value="DHQ_synth_AroB"/>
</dbReference>
<dbReference type="InterPro" id="IPR030963">
    <property type="entry name" value="DHQ_synth_fam"/>
</dbReference>
<dbReference type="InterPro" id="IPR030960">
    <property type="entry name" value="DHQS/DOIS_N"/>
</dbReference>
<dbReference type="InterPro" id="IPR056179">
    <property type="entry name" value="DHQS_C"/>
</dbReference>
<dbReference type="NCBIfam" id="TIGR01357">
    <property type="entry name" value="aroB"/>
    <property type="match status" value="1"/>
</dbReference>
<dbReference type="PANTHER" id="PTHR43622">
    <property type="entry name" value="3-DEHYDROQUINATE SYNTHASE"/>
    <property type="match status" value="1"/>
</dbReference>
<dbReference type="PANTHER" id="PTHR43622:SF7">
    <property type="entry name" value="3-DEHYDROQUINATE SYNTHASE, CHLOROPLASTIC"/>
    <property type="match status" value="1"/>
</dbReference>
<dbReference type="Pfam" id="PF01761">
    <property type="entry name" value="DHQ_synthase"/>
    <property type="match status" value="1"/>
</dbReference>
<dbReference type="Pfam" id="PF24621">
    <property type="entry name" value="DHQS_C"/>
    <property type="match status" value="1"/>
</dbReference>
<dbReference type="PIRSF" id="PIRSF001455">
    <property type="entry name" value="DHQ_synth"/>
    <property type="match status" value="1"/>
</dbReference>
<dbReference type="SUPFAM" id="SSF56796">
    <property type="entry name" value="Dehydroquinate synthase-like"/>
    <property type="match status" value="1"/>
</dbReference>